<reference key="1">
    <citation type="journal article" date="1999" name="Virology">
        <title>Isolation and characterization of APSE-1, a bacteriophage infecting the secondary endosymbiont of acyrthosiphon pisum.</title>
        <authorList>
            <person name="van der Wilk F."/>
            <person name="Dullemans A.M."/>
            <person name="Verbeek M."/>
            <person name="van den Heuvel J.F.J.M."/>
        </authorList>
    </citation>
    <scope>NUCLEOTIDE SEQUENCE [LARGE SCALE GENOMIC DNA]</scope>
</reference>
<sequence length="155" mass="18172">MEIKVIENIEQFYRFFTDKAKVGYAMENNGEYQLKNNQLYVGVYEGLMLVGFFSIEFIRNKLIEVHPVFEPGFRGQYALAATKRFSNWLINNIHFSTVITYVPEKTPWGKVICQLMKMRKVGVIDNALTAGHHQINMTLYQVTKEELVNGWKQRR</sequence>
<keyword id="KW-1185">Reference proteome</keyword>
<gene>
    <name type="primary">31</name>
</gene>
<dbReference type="EMBL" id="AF157835">
    <property type="protein sequence ID" value="AAF03974.1"/>
    <property type="molecule type" value="Genomic_DNA"/>
</dbReference>
<dbReference type="RefSeq" id="NP_050992.1">
    <property type="nucleotide sequence ID" value="NC_000935.1"/>
</dbReference>
<dbReference type="SMR" id="Q9T1R7"/>
<dbReference type="KEGG" id="vg:1262325"/>
<dbReference type="Proteomes" id="UP000000853">
    <property type="component" value="Genome"/>
</dbReference>
<dbReference type="InterPro" id="IPR022568">
    <property type="entry name" value="DUF2824"/>
</dbReference>
<dbReference type="Pfam" id="PF11039">
    <property type="entry name" value="DUF2824"/>
    <property type="match status" value="1"/>
</dbReference>
<name>VP31_BPAPS</name>
<accession>Q9T1R7</accession>
<protein>
    <recommendedName>
        <fullName>Putative protein p31</fullName>
    </recommendedName>
</protein>
<organism>
    <name type="scientific">Acyrthosiphon pisum secondary endosymbiont phage 1</name>
    <name type="common">Bacteriophage APSE-1</name>
    <dbReference type="NCBI Taxonomy" id="2682836"/>
    <lineage>
        <taxon>Viruses</taxon>
        <taxon>Duplodnaviria</taxon>
        <taxon>Heunggongvirae</taxon>
        <taxon>Uroviricota</taxon>
        <taxon>Caudoviricetes</taxon>
        <taxon>Sendosyvirus</taxon>
        <taxon>Sendosyvirus APSE1</taxon>
    </lineage>
</organism>
<proteinExistence type="predicted"/>
<organismHost>
    <name type="scientific">Escherichia coli</name>
    <dbReference type="NCBI Taxonomy" id="562"/>
</organismHost>
<feature type="chain" id="PRO_0000077867" description="Putative protein p31">
    <location>
        <begin position="1"/>
        <end position="155"/>
    </location>
</feature>